<reference key="1">
    <citation type="submission" date="2008-04" db="EMBL/GenBank/DDBJ databases">
        <title>Complete sequence of Yersinia pseudotuberculosis PB1/+.</title>
        <authorList>
            <person name="Copeland A."/>
            <person name="Lucas S."/>
            <person name="Lapidus A."/>
            <person name="Glavina del Rio T."/>
            <person name="Dalin E."/>
            <person name="Tice H."/>
            <person name="Bruce D."/>
            <person name="Goodwin L."/>
            <person name="Pitluck S."/>
            <person name="Munk A.C."/>
            <person name="Brettin T."/>
            <person name="Detter J.C."/>
            <person name="Han C."/>
            <person name="Tapia R."/>
            <person name="Schmutz J."/>
            <person name="Larimer F."/>
            <person name="Land M."/>
            <person name="Hauser L."/>
            <person name="Challacombe J.F."/>
            <person name="Green L."/>
            <person name="Lindler L.E."/>
            <person name="Nikolich M.P."/>
            <person name="Richardson P."/>
        </authorList>
    </citation>
    <scope>NUCLEOTIDE SEQUENCE [LARGE SCALE GENOMIC DNA]</scope>
    <source>
        <strain>PB1/+</strain>
    </source>
</reference>
<evidence type="ECO:0000255" key="1">
    <source>
        <dbReference type="HAMAP-Rule" id="MF_02017"/>
    </source>
</evidence>
<evidence type="ECO:0000256" key="2">
    <source>
        <dbReference type="SAM" id="MobiDB-lite"/>
    </source>
</evidence>
<accession>B2K9Q1</accession>
<proteinExistence type="inferred from homology"/>
<organism>
    <name type="scientific">Yersinia pseudotuberculosis serotype IB (strain PB1/+)</name>
    <dbReference type="NCBI Taxonomy" id="502801"/>
    <lineage>
        <taxon>Bacteria</taxon>
        <taxon>Pseudomonadati</taxon>
        <taxon>Pseudomonadota</taxon>
        <taxon>Gammaproteobacteria</taxon>
        <taxon>Enterobacterales</taxon>
        <taxon>Yersiniaceae</taxon>
        <taxon>Yersinia</taxon>
    </lineage>
</organism>
<name>RODZ_YERPB</name>
<keyword id="KW-0997">Cell inner membrane</keyword>
<keyword id="KW-1003">Cell membrane</keyword>
<keyword id="KW-0133">Cell shape</keyword>
<keyword id="KW-0238">DNA-binding</keyword>
<keyword id="KW-0472">Membrane</keyword>
<keyword id="KW-0735">Signal-anchor</keyword>
<keyword id="KW-0812">Transmembrane</keyword>
<keyword id="KW-1133">Transmembrane helix</keyword>
<gene>
    <name evidence="1" type="primary">rodZ</name>
    <name type="ordered locus">YPTS_2951</name>
</gene>
<dbReference type="EMBL" id="CP001048">
    <property type="protein sequence ID" value="ACC89908.1"/>
    <property type="molecule type" value="Genomic_DNA"/>
</dbReference>
<dbReference type="RefSeq" id="WP_011192802.1">
    <property type="nucleotide sequence ID" value="NZ_CP009780.1"/>
</dbReference>
<dbReference type="SMR" id="B2K9Q1"/>
<dbReference type="GeneID" id="49785148"/>
<dbReference type="KEGG" id="ypb:YPTS_2951"/>
<dbReference type="PATRIC" id="fig|502801.10.peg.2381"/>
<dbReference type="GO" id="GO:0005886">
    <property type="term" value="C:plasma membrane"/>
    <property type="evidence" value="ECO:0007669"/>
    <property type="project" value="UniProtKB-SubCell"/>
</dbReference>
<dbReference type="GO" id="GO:0003677">
    <property type="term" value="F:DNA binding"/>
    <property type="evidence" value="ECO:0007669"/>
    <property type="project" value="UniProtKB-KW"/>
</dbReference>
<dbReference type="GO" id="GO:0008360">
    <property type="term" value="P:regulation of cell shape"/>
    <property type="evidence" value="ECO:0007669"/>
    <property type="project" value="UniProtKB-UniRule"/>
</dbReference>
<dbReference type="CDD" id="cd00093">
    <property type="entry name" value="HTH_XRE"/>
    <property type="match status" value="1"/>
</dbReference>
<dbReference type="Gene3D" id="1.10.260.40">
    <property type="entry name" value="lambda repressor-like DNA-binding domains"/>
    <property type="match status" value="1"/>
</dbReference>
<dbReference type="HAMAP" id="MF_02017">
    <property type="entry name" value="RodZ"/>
    <property type="match status" value="1"/>
</dbReference>
<dbReference type="InterPro" id="IPR050400">
    <property type="entry name" value="Bact_Cytoskel_RodZ"/>
</dbReference>
<dbReference type="InterPro" id="IPR001387">
    <property type="entry name" value="Cro/C1-type_HTH"/>
</dbReference>
<dbReference type="InterPro" id="IPR010982">
    <property type="entry name" value="Lambda_DNA-bd_dom_sf"/>
</dbReference>
<dbReference type="InterPro" id="IPR023690">
    <property type="entry name" value="RodZ"/>
</dbReference>
<dbReference type="InterPro" id="IPR025194">
    <property type="entry name" value="RodZ-like_C"/>
</dbReference>
<dbReference type="NCBIfam" id="NF008109">
    <property type="entry name" value="PRK10856.1"/>
    <property type="match status" value="1"/>
</dbReference>
<dbReference type="PANTHER" id="PTHR34475">
    <property type="match status" value="1"/>
</dbReference>
<dbReference type="PANTHER" id="PTHR34475:SF1">
    <property type="entry name" value="CYTOSKELETON PROTEIN RODZ"/>
    <property type="match status" value="1"/>
</dbReference>
<dbReference type="Pfam" id="PF13413">
    <property type="entry name" value="HTH_25"/>
    <property type="match status" value="1"/>
</dbReference>
<dbReference type="Pfam" id="PF13464">
    <property type="entry name" value="RodZ_C"/>
    <property type="match status" value="1"/>
</dbReference>
<dbReference type="SMART" id="SM00530">
    <property type="entry name" value="HTH_XRE"/>
    <property type="match status" value="1"/>
</dbReference>
<dbReference type="SUPFAM" id="SSF47413">
    <property type="entry name" value="lambda repressor-like DNA-binding domains"/>
    <property type="match status" value="1"/>
</dbReference>
<dbReference type="PROSITE" id="PS50943">
    <property type="entry name" value="HTH_CROC1"/>
    <property type="match status" value="1"/>
</dbReference>
<protein>
    <recommendedName>
        <fullName evidence="1">Cytoskeleton protein RodZ</fullName>
    </recommendedName>
</protein>
<sequence length="362" mass="38058">MNTEASQDQTVTETPGVRLRQARESLGLTQQTVAERLCLKVSTIRDIEEDNAQANLASTFHRGYIRSYAKLVHLPEDELLPILEKQAPVRAAKVAPMQSFSLGKKHKKRDGWLMSFTWLIVLVVLGLTGAWWWQNHQAQQAEIANMVDQSSAQLSQNGGQPVPLTDDNSDAIAPTDAPAPVANGQPVPLTNHSTSAVTNSATTSSATTSSVPTTSSVPKTTLVPKTNSTEPVDTANTNTTMHQEGAASAAVSPSQVPQPGLSTGPSPLPTADAGVSGSTSSVGALVMNFTADCWLQVVDATGKTLFSGIQKGGAVLNLAGKAPYKLTIGAPGALTISYQGNPVDLSKFIKANRVARLTVGVE</sequence>
<feature type="chain" id="PRO_0000361875" description="Cytoskeleton protein RodZ">
    <location>
        <begin position="1"/>
        <end position="362"/>
    </location>
</feature>
<feature type="topological domain" description="Cytoplasmic" evidence="1">
    <location>
        <begin position="1"/>
        <end position="111"/>
    </location>
</feature>
<feature type="transmembrane region" description="Helical; Signal-anchor for type II membrane protein" evidence="1">
    <location>
        <begin position="112"/>
        <end position="132"/>
    </location>
</feature>
<feature type="topological domain" description="Periplasmic" evidence="1">
    <location>
        <begin position="133"/>
        <end position="362"/>
    </location>
</feature>
<feature type="domain" description="HTH cro/C1-type" evidence="1">
    <location>
        <begin position="19"/>
        <end position="79"/>
    </location>
</feature>
<feature type="DNA-binding region" description="H-T-H motif" evidence="1">
    <location>
        <begin position="30"/>
        <end position="49"/>
    </location>
</feature>
<feature type="region of interest" description="Disordered" evidence="2">
    <location>
        <begin position="151"/>
        <end position="277"/>
    </location>
</feature>
<feature type="compositionally biased region" description="Low complexity" evidence="2">
    <location>
        <begin position="193"/>
        <end position="221"/>
    </location>
</feature>
<feature type="compositionally biased region" description="Polar residues" evidence="2">
    <location>
        <begin position="223"/>
        <end position="242"/>
    </location>
</feature>
<feature type="compositionally biased region" description="Low complexity" evidence="2">
    <location>
        <begin position="246"/>
        <end position="259"/>
    </location>
</feature>
<comment type="function">
    <text evidence="1">Cytoskeletal protein that is involved in cell-shape control through regulation of the length of the long axis.</text>
</comment>
<comment type="subcellular location">
    <subcellularLocation>
        <location evidence="1">Cell inner membrane</location>
        <topology evidence="1">Single-pass type II membrane protein</topology>
    </subcellularLocation>
    <text evidence="1">Forms helical filaments along the long axis of the cell.</text>
</comment>
<comment type="domain">
    <text evidence="1">The helix-turn-helix (HTH) motif in the cytoplasmic domain of the N-terminus is involved in the formation of spirals to maintain the rigid rod shape. As this protein is anchored in the cytoplasmic membrane, the HTH motif may contribute to protein-protein interactions to form the RodZ helix, which is localized beneath the cytoplasmic membrane. The C-terminal domain may be critical for determination of the rod shape by probably interacting with enzymes required for synthesis of the peptidoglycan layer, including PBPs in the periplasm.</text>
</comment>
<comment type="similarity">
    <text evidence="1">Belongs to the RodZ family.</text>
</comment>